<protein>
    <recommendedName>
        <fullName>Pre-mRNA-splicing factor ISY1</fullName>
    </recommendedName>
</protein>
<comment type="function">
    <text evidence="1">Involved in pre-mRNA splicing.</text>
</comment>
<comment type="subunit">
    <text evidence="1">Associated with the spliceosome.</text>
</comment>
<comment type="subcellular location">
    <subcellularLocation>
        <location evidence="1">Cytoplasm</location>
    </subcellularLocation>
    <subcellularLocation>
        <location evidence="1">Nucleus</location>
    </subcellularLocation>
</comment>
<comment type="similarity">
    <text evidence="2">Belongs to the ISY1 family.</text>
</comment>
<sequence length="237" mass="27933">MSRNVNKANSVLVRYQELQAAETGGYQDFSRLKRPTRINKVTKLDEALRWRNELVKEIGQRVTQIHDPSLNESQITEINDELNKLFQEKGRWDFHIRNKLKGPDLKKRKQLNTTGGTLIDGKRYFGRALELPEVQKLLRESKEQREKERSGKEKKAELQRKIKRWESTLKDDYFVGNNSDELLEYEKKRTGSLRSTIHSSDRDPSFVIPNFDVPSLKDVELWLVQRRKNELKKQLGL</sequence>
<accession>Q6CJQ3</accession>
<dbReference type="EMBL" id="CR382126">
    <property type="protein sequence ID" value="CAG98544.1"/>
    <property type="molecule type" value="Genomic_DNA"/>
</dbReference>
<dbReference type="RefSeq" id="XP_455836.1">
    <property type="nucleotide sequence ID" value="XM_455836.1"/>
</dbReference>
<dbReference type="SMR" id="Q6CJQ3"/>
<dbReference type="FunCoup" id="Q6CJQ3">
    <property type="interactions" value="267"/>
</dbReference>
<dbReference type="STRING" id="284590.Q6CJQ3"/>
<dbReference type="PaxDb" id="284590-Q6CJQ3"/>
<dbReference type="KEGG" id="kla:KLLA0_F16841g"/>
<dbReference type="eggNOG" id="KOG3068">
    <property type="taxonomic scope" value="Eukaryota"/>
</dbReference>
<dbReference type="HOGENOM" id="CLU_043453_2_1_1"/>
<dbReference type="InParanoid" id="Q6CJQ3"/>
<dbReference type="OMA" id="QKSTRIY"/>
<dbReference type="Proteomes" id="UP000000598">
    <property type="component" value="Chromosome F"/>
</dbReference>
<dbReference type="GO" id="GO:0005737">
    <property type="term" value="C:cytoplasm"/>
    <property type="evidence" value="ECO:0007669"/>
    <property type="project" value="UniProtKB-SubCell"/>
</dbReference>
<dbReference type="GO" id="GO:0005681">
    <property type="term" value="C:spliceosomal complex"/>
    <property type="evidence" value="ECO:0007669"/>
    <property type="project" value="UniProtKB-KW"/>
</dbReference>
<dbReference type="GO" id="GO:0000350">
    <property type="term" value="P:generation of catalytic spliceosome for second transesterification step"/>
    <property type="evidence" value="ECO:0007669"/>
    <property type="project" value="InterPro"/>
</dbReference>
<dbReference type="FunFam" id="1.10.287.660:FF:000001">
    <property type="entry name" value="pre-mRNA-splicing factor ISY1 homolog"/>
    <property type="match status" value="1"/>
</dbReference>
<dbReference type="Gene3D" id="1.10.287.660">
    <property type="entry name" value="Helix hairpin bin"/>
    <property type="match status" value="1"/>
</dbReference>
<dbReference type="InterPro" id="IPR029012">
    <property type="entry name" value="Helix_hairpin_bin_sf"/>
</dbReference>
<dbReference type="InterPro" id="IPR009360">
    <property type="entry name" value="Isy1"/>
</dbReference>
<dbReference type="InterPro" id="IPR037200">
    <property type="entry name" value="Isy1_sf"/>
</dbReference>
<dbReference type="PANTHER" id="PTHR13021">
    <property type="entry name" value="PRE-MRNA-SPLICING FACTOR ISY1"/>
    <property type="match status" value="1"/>
</dbReference>
<dbReference type="Pfam" id="PF06246">
    <property type="entry name" value="Isy1"/>
    <property type="match status" value="1"/>
</dbReference>
<dbReference type="SUPFAM" id="SSF140102">
    <property type="entry name" value="ISY1 domain-like"/>
    <property type="match status" value="1"/>
</dbReference>
<proteinExistence type="inferred from homology"/>
<reference key="1">
    <citation type="journal article" date="2004" name="Nature">
        <title>Genome evolution in yeasts.</title>
        <authorList>
            <person name="Dujon B."/>
            <person name="Sherman D."/>
            <person name="Fischer G."/>
            <person name="Durrens P."/>
            <person name="Casaregola S."/>
            <person name="Lafontaine I."/>
            <person name="de Montigny J."/>
            <person name="Marck C."/>
            <person name="Neuveglise C."/>
            <person name="Talla E."/>
            <person name="Goffard N."/>
            <person name="Frangeul L."/>
            <person name="Aigle M."/>
            <person name="Anthouard V."/>
            <person name="Babour A."/>
            <person name="Barbe V."/>
            <person name="Barnay S."/>
            <person name="Blanchin S."/>
            <person name="Beckerich J.-M."/>
            <person name="Beyne E."/>
            <person name="Bleykasten C."/>
            <person name="Boisrame A."/>
            <person name="Boyer J."/>
            <person name="Cattolico L."/>
            <person name="Confanioleri F."/>
            <person name="de Daruvar A."/>
            <person name="Despons L."/>
            <person name="Fabre E."/>
            <person name="Fairhead C."/>
            <person name="Ferry-Dumazet H."/>
            <person name="Groppi A."/>
            <person name="Hantraye F."/>
            <person name="Hennequin C."/>
            <person name="Jauniaux N."/>
            <person name="Joyet P."/>
            <person name="Kachouri R."/>
            <person name="Kerrest A."/>
            <person name="Koszul R."/>
            <person name="Lemaire M."/>
            <person name="Lesur I."/>
            <person name="Ma L."/>
            <person name="Muller H."/>
            <person name="Nicaud J.-M."/>
            <person name="Nikolski M."/>
            <person name="Oztas S."/>
            <person name="Ozier-Kalogeropoulos O."/>
            <person name="Pellenz S."/>
            <person name="Potier S."/>
            <person name="Richard G.-F."/>
            <person name="Straub M.-L."/>
            <person name="Suleau A."/>
            <person name="Swennen D."/>
            <person name="Tekaia F."/>
            <person name="Wesolowski-Louvel M."/>
            <person name="Westhof E."/>
            <person name="Wirth B."/>
            <person name="Zeniou-Meyer M."/>
            <person name="Zivanovic Y."/>
            <person name="Bolotin-Fukuhara M."/>
            <person name="Thierry A."/>
            <person name="Bouchier C."/>
            <person name="Caudron B."/>
            <person name="Scarpelli C."/>
            <person name="Gaillardin C."/>
            <person name="Weissenbach J."/>
            <person name="Wincker P."/>
            <person name="Souciet J.-L."/>
        </authorList>
    </citation>
    <scope>NUCLEOTIDE SEQUENCE [LARGE SCALE GENOMIC DNA]</scope>
    <source>
        <strain>ATCC 8585 / CBS 2359 / DSM 70799 / NBRC 1267 / NRRL Y-1140 / WM37</strain>
    </source>
</reference>
<evidence type="ECO:0000250" key="1"/>
<evidence type="ECO:0000305" key="2"/>
<name>ISY1_KLULA</name>
<organism>
    <name type="scientific">Kluyveromyces lactis (strain ATCC 8585 / CBS 2359 / DSM 70799 / NBRC 1267 / NRRL Y-1140 / WM37)</name>
    <name type="common">Yeast</name>
    <name type="synonym">Candida sphaerica</name>
    <dbReference type="NCBI Taxonomy" id="284590"/>
    <lineage>
        <taxon>Eukaryota</taxon>
        <taxon>Fungi</taxon>
        <taxon>Dikarya</taxon>
        <taxon>Ascomycota</taxon>
        <taxon>Saccharomycotina</taxon>
        <taxon>Saccharomycetes</taxon>
        <taxon>Saccharomycetales</taxon>
        <taxon>Saccharomycetaceae</taxon>
        <taxon>Kluyveromyces</taxon>
    </lineage>
</organism>
<keyword id="KW-0963">Cytoplasm</keyword>
<keyword id="KW-0507">mRNA processing</keyword>
<keyword id="KW-0508">mRNA splicing</keyword>
<keyword id="KW-0539">Nucleus</keyword>
<keyword id="KW-1185">Reference proteome</keyword>
<keyword id="KW-0747">Spliceosome</keyword>
<gene>
    <name type="primary">ISY1</name>
    <name type="ordered locus">KLLA0F16841g</name>
</gene>
<feature type="chain" id="PRO_0000192970" description="Pre-mRNA-splicing factor ISY1">
    <location>
        <begin position="1"/>
        <end position="237"/>
    </location>
</feature>